<protein>
    <recommendedName>
        <fullName>ATP-dependent RNA helicase ded1</fullName>
        <ecNumber>3.6.4.13</ecNumber>
    </recommendedName>
</protein>
<keyword id="KW-0067">ATP-binding</keyword>
<keyword id="KW-0963">Cytoplasm</keyword>
<keyword id="KW-0347">Helicase</keyword>
<keyword id="KW-0378">Hydrolase</keyword>
<keyword id="KW-0396">Initiation factor</keyword>
<keyword id="KW-0547">Nucleotide-binding</keyword>
<keyword id="KW-0648">Protein biosynthesis</keyword>
<keyword id="KW-1185">Reference proteome</keyword>
<keyword id="KW-0694">RNA-binding</keyword>
<accession>A6SEH9</accession>
<accession>A0A384JGF9</accession>
<reference key="1">
    <citation type="journal article" date="2011" name="PLoS Genet.">
        <title>Genomic analysis of the necrotrophic fungal pathogens Sclerotinia sclerotiorum and Botrytis cinerea.</title>
        <authorList>
            <person name="Amselem J."/>
            <person name="Cuomo C.A."/>
            <person name="van Kan J.A.L."/>
            <person name="Viaud M."/>
            <person name="Benito E.P."/>
            <person name="Couloux A."/>
            <person name="Coutinho P.M."/>
            <person name="de Vries R.P."/>
            <person name="Dyer P.S."/>
            <person name="Fillinger S."/>
            <person name="Fournier E."/>
            <person name="Gout L."/>
            <person name="Hahn M."/>
            <person name="Kohn L."/>
            <person name="Lapalu N."/>
            <person name="Plummer K.M."/>
            <person name="Pradier J.-M."/>
            <person name="Quevillon E."/>
            <person name="Sharon A."/>
            <person name="Simon A."/>
            <person name="ten Have A."/>
            <person name="Tudzynski B."/>
            <person name="Tudzynski P."/>
            <person name="Wincker P."/>
            <person name="Andrew M."/>
            <person name="Anthouard V."/>
            <person name="Beever R.E."/>
            <person name="Beffa R."/>
            <person name="Benoit I."/>
            <person name="Bouzid O."/>
            <person name="Brault B."/>
            <person name="Chen Z."/>
            <person name="Choquer M."/>
            <person name="Collemare J."/>
            <person name="Cotton P."/>
            <person name="Danchin E.G."/>
            <person name="Da Silva C."/>
            <person name="Gautier A."/>
            <person name="Giraud C."/>
            <person name="Giraud T."/>
            <person name="Gonzalez C."/>
            <person name="Grossetete S."/>
            <person name="Gueldener U."/>
            <person name="Henrissat B."/>
            <person name="Howlett B.J."/>
            <person name="Kodira C."/>
            <person name="Kretschmer M."/>
            <person name="Lappartient A."/>
            <person name="Leroch M."/>
            <person name="Levis C."/>
            <person name="Mauceli E."/>
            <person name="Neuveglise C."/>
            <person name="Oeser B."/>
            <person name="Pearson M."/>
            <person name="Poulain J."/>
            <person name="Poussereau N."/>
            <person name="Quesneville H."/>
            <person name="Rascle C."/>
            <person name="Schumacher J."/>
            <person name="Segurens B."/>
            <person name="Sexton A."/>
            <person name="Silva E."/>
            <person name="Sirven C."/>
            <person name="Soanes D.M."/>
            <person name="Talbot N.J."/>
            <person name="Templeton M."/>
            <person name="Yandava C."/>
            <person name="Yarden O."/>
            <person name="Zeng Q."/>
            <person name="Rollins J.A."/>
            <person name="Lebrun M.-H."/>
            <person name="Dickman M."/>
        </authorList>
    </citation>
    <scope>NUCLEOTIDE SEQUENCE [LARGE SCALE GENOMIC DNA]</scope>
    <source>
        <strain>B05.10</strain>
    </source>
</reference>
<reference key="2">
    <citation type="journal article" date="2012" name="Eukaryot. Cell">
        <title>Genome update of Botrytis cinerea strains B05.10 and T4.</title>
        <authorList>
            <person name="Staats M."/>
            <person name="van Kan J.A.L."/>
        </authorList>
    </citation>
    <scope>NUCLEOTIDE SEQUENCE [LARGE SCALE GENOMIC DNA]</scope>
    <scope>GENOME REANNOTATION</scope>
    <source>
        <strain>B05.10</strain>
    </source>
</reference>
<reference key="3">
    <citation type="journal article" date="2017" name="Mol. Plant Pathol.">
        <title>A gapless genome sequence of the fungus Botrytis cinerea.</title>
        <authorList>
            <person name="van Kan J.A.L."/>
            <person name="Stassen J.H.M."/>
            <person name="Mosbach A."/>
            <person name="van der Lee T.A.J."/>
            <person name="Faino L."/>
            <person name="Farmer A.D."/>
            <person name="Papasotiriou D.G."/>
            <person name="Zhou S."/>
            <person name="Seidl M.F."/>
            <person name="Cottam E."/>
            <person name="Edel D."/>
            <person name="Hahn M."/>
            <person name="Schwartz D.C."/>
            <person name="Dietrich R.A."/>
            <person name="Widdison S."/>
            <person name="Scalliet G."/>
        </authorList>
    </citation>
    <scope>NUCLEOTIDE SEQUENCE [LARGE SCALE GENOMIC DNA]</scope>
    <scope>GENOME REANNOTATION</scope>
    <source>
        <strain>B05.10</strain>
    </source>
</reference>
<dbReference type="EC" id="3.6.4.13"/>
<dbReference type="EMBL" id="CP009809">
    <property type="protein sequence ID" value="ATZ49580.1"/>
    <property type="molecule type" value="Genomic_DNA"/>
</dbReference>
<dbReference type="RefSeq" id="XP_001550389.1">
    <property type="nucleotide sequence ID" value="XM_001550339.1"/>
</dbReference>
<dbReference type="SMR" id="A6SEH9"/>
<dbReference type="EnsemblFungi" id="Bcin05g00090.1">
    <property type="protein sequence ID" value="Bcin05p00090.1"/>
    <property type="gene ID" value="Bcin05g00090"/>
</dbReference>
<dbReference type="GeneID" id="5430884"/>
<dbReference type="KEGG" id="bfu:BCIN_05g00090"/>
<dbReference type="VEuPathDB" id="FungiDB:Bcin05g00090"/>
<dbReference type="OMA" id="CYRSWVR"/>
<dbReference type="OrthoDB" id="196131at2759"/>
<dbReference type="Proteomes" id="UP000001798">
    <property type="component" value="Chromosome bcin05"/>
</dbReference>
<dbReference type="GO" id="GO:0010494">
    <property type="term" value="C:cytoplasmic stress granule"/>
    <property type="evidence" value="ECO:0007669"/>
    <property type="project" value="EnsemblFungi"/>
</dbReference>
<dbReference type="GO" id="GO:0005681">
    <property type="term" value="C:spliceosomal complex"/>
    <property type="evidence" value="ECO:0007669"/>
    <property type="project" value="EnsemblFungi"/>
</dbReference>
<dbReference type="GO" id="GO:0005524">
    <property type="term" value="F:ATP binding"/>
    <property type="evidence" value="ECO:0007669"/>
    <property type="project" value="UniProtKB-KW"/>
</dbReference>
<dbReference type="GO" id="GO:0016887">
    <property type="term" value="F:ATP hydrolysis activity"/>
    <property type="evidence" value="ECO:0007669"/>
    <property type="project" value="RHEA"/>
</dbReference>
<dbReference type="GO" id="GO:0031370">
    <property type="term" value="F:eukaryotic initiation factor 4G binding"/>
    <property type="evidence" value="ECO:0007669"/>
    <property type="project" value="EnsemblFungi"/>
</dbReference>
<dbReference type="GO" id="GO:0051880">
    <property type="term" value="F:G-quadruplex DNA binding"/>
    <property type="evidence" value="ECO:0007669"/>
    <property type="project" value="EnsemblFungi"/>
</dbReference>
<dbReference type="GO" id="GO:0002151">
    <property type="term" value="F:G-quadruplex RNA binding"/>
    <property type="evidence" value="ECO:0007669"/>
    <property type="project" value="EnsemblFungi"/>
</dbReference>
<dbReference type="GO" id="GO:0003729">
    <property type="term" value="F:mRNA binding"/>
    <property type="evidence" value="ECO:0007669"/>
    <property type="project" value="EnsemblFungi"/>
</dbReference>
<dbReference type="GO" id="GO:0003724">
    <property type="term" value="F:RNA helicase activity"/>
    <property type="evidence" value="ECO:0007669"/>
    <property type="project" value="UniProtKB-EC"/>
</dbReference>
<dbReference type="GO" id="GO:0033592">
    <property type="term" value="F:RNA strand annealing activity"/>
    <property type="evidence" value="ECO:0007669"/>
    <property type="project" value="EnsemblFungi"/>
</dbReference>
<dbReference type="GO" id="GO:0003743">
    <property type="term" value="F:translation initiation factor activity"/>
    <property type="evidence" value="ECO:0007669"/>
    <property type="project" value="UniProtKB-KW"/>
</dbReference>
<dbReference type="GO" id="GO:0002183">
    <property type="term" value="P:cytoplasmic translational initiation"/>
    <property type="evidence" value="ECO:0007669"/>
    <property type="project" value="EnsemblFungi"/>
</dbReference>
<dbReference type="GO" id="GO:1990625">
    <property type="term" value="P:negative regulation of cytoplasmic translational initiation in response to stress"/>
    <property type="evidence" value="ECO:0007669"/>
    <property type="project" value="EnsemblFungi"/>
</dbReference>
<dbReference type="GO" id="GO:1901195">
    <property type="term" value="P:positive regulation of formation of translation preinitiation complex"/>
    <property type="evidence" value="ECO:0007669"/>
    <property type="project" value="EnsemblFungi"/>
</dbReference>
<dbReference type="GO" id="GO:0031047">
    <property type="term" value="P:regulatory ncRNA-mediated gene silencing"/>
    <property type="evidence" value="ECO:0007669"/>
    <property type="project" value="EnsemblFungi"/>
</dbReference>
<dbReference type="GO" id="GO:0000390">
    <property type="term" value="P:spliceosomal complex disassembly"/>
    <property type="evidence" value="ECO:0007669"/>
    <property type="project" value="EnsemblFungi"/>
</dbReference>
<dbReference type="CDD" id="cd18787">
    <property type="entry name" value="SF2_C_DEAD"/>
    <property type="match status" value="1"/>
</dbReference>
<dbReference type="FunFam" id="3.40.50.300:FF:000160">
    <property type="entry name" value="ATP-dependent RNA helicase DDX3X"/>
    <property type="match status" value="1"/>
</dbReference>
<dbReference type="FunFam" id="3.40.50.300:FF:000008">
    <property type="entry name" value="ATP-dependent RNA helicase RhlB"/>
    <property type="match status" value="1"/>
</dbReference>
<dbReference type="Gene3D" id="3.40.50.300">
    <property type="entry name" value="P-loop containing nucleotide triphosphate hydrolases"/>
    <property type="match status" value="2"/>
</dbReference>
<dbReference type="InterPro" id="IPR011545">
    <property type="entry name" value="DEAD/DEAH_box_helicase_dom"/>
</dbReference>
<dbReference type="InterPro" id="IPR014001">
    <property type="entry name" value="Helicase_ATP-bd"/>
</dbReference>
<dbReference type="InterPro" id="IPR001650">
    <property type="entry name" value="Helicase_C-like"/>
</dbReference>
<dbReference type="InterPro" id="IPR027417">
    <property type="entry name" value="P-loop_NTPase"/>
</dbReference>
<dbReference type="InterPro" id="IPR000629">
    <property type="entry name" value="RNA-helicase_DEAD-box_CS"/>
</dbReference>
<dbReference type="InterPro" id="IPR014014">
    <property type="entry name" value="RNA_helicase_DEAD_Q_motif"/>
</dbReference>
<dbReference type="PANTHER" id="PTHR47958">
    <property type="entry name" value="ATP-DEPENDENT RNA HELICASE DBP3"/>
    <property type="match status" value="1"/>
</dbReference>
<dbReference type="Pfam" id="PF00270">
    <property type="entry name" value="DEAD"/>
    <property type="match status" value="1"/>
</dbReference>
<dbReference type="Pfam" id="PF00271">
    <property type="entry name" value="Helicase_C"/>
    <property type="match status" value="1"/>
</dbReference>
<dbReference type="SMART" id="SM00487">
    <property type="entry name" value="DEXDc"/>
    <property type="match status" value="1"/>
</dbReference>
<dbReference type="SMART" id="SM00490">
    <property type="entry name" value="HELICc"/>
    <property type="match status" value="1"/>
</dbReference>
<dbReference type="SUPFAM" id="SSF52540">
    <property type="entry name" value="P-loop containing nucleoside triphosphate hydrolases"/>
    <property type="match status" value="1"/>
</dbReference>
<dbReference type="PROSITE" id="PS00039">
    <property type="entry name" value="DEAD_ATP_HELICASE"/>
    <property type="match status" value="1"/>
</dbReference>
<dbReference type="PROSITE" id="PS51192">
    <property type="entry name" value="HELICASE_ATP_BIND_1"/>
    <property type="match status" value="1"/>
</dbReference>
<dbReference type="PROSITE" id="PS51194">
    <property type="entry name" value="HELICASE_CTER"/>
    <property type="match status" value="1"/>
</dbReference>
<dbReference type="PROSITE" id="PS51195">
    <property type="entry name" value="Q_MOTIF"/>
    <property type="match status" value="1"/>
</dbReference>
<sequence>MADQLNMNGLNLNGGEPRSYIPPHMRGKMGGPAPAGPPANLNGSAWAPQGNGYANGPRPAGGDSWANAPDFTPRGNGAPRGGNNWNPSGPPSFNKNAYGNPAAGAGGPGGAGGAGGAGGGAGQARGGGDGQWRDGKHIAGPANARVERELFGIADDPTKQQTGINFEKYDDIPVEASGQDVPEPVLKFTNPPLDDHLIKNIELAHYKVPTPVQKYSIPIVMGGRDLMACAQTGSGKTGGFLFPILSQAFQTGPSPVPANAAGSFGRTRKAYPTSLILAPTRELVSQIYDESRKFAYRSWVRPCVVYGGADIGSQLRQMERGCDLLVATPGRLVDLIERGRISLQNIKYLVLDEADRMLDMGFEPQIRRIVEGEDMPGVQNRQTLMFSATFPRDIQMLARDFLKDYVFLSVGRVGSTSENITQKVEYVEDIDKRSVLLDILHTHGAGLTLIFVETKRMADSLSDFLINQNFPATSIHGDRTQRERERALEMFRNGRCPILVATAVAARGLDIPNVKHVVNYDLPTDIDDYVHRIGRTGRAGNTGISTAFFNRGNRGVCRDLIELLKEANQEIPSFLENIAREGGGFGGGRGGRSGGRGRGGGANRDFRKFGGGGGGGFNGGGGFGGPPASGGYGGGGGGFGGPPAPSSYGPPPGQYGGGGGGYGGGNGGGYGNPSAGGGGQSWW</sequence>
<name>DED1_BOTFB</name>
<comment type="function">
    <text evidence="1">ATP-binding RNA helicase involved in translation initiation. Remodels RNA in response to ADP and ATP concentrations by facilitating disruption, but also formation of RNA duplexes (By similarity).</text>
</comment>
<comment type="catalytic activity">
    <reaction>
        <text>ATP + H2O = ADP + phosphate + H(+)</text>
        <dbReference type="Rhea" id="RHEA:13065"/>
        <dbReference type="ChEBI" id="CHEBI:15377"/>
        <dbReference type="ChEBI" id="CHEBI:15378"/>
        <dbReference type="ChEBI" id="CHEBI:30616"/>
        <dbReference type="ChEBI" id="CHEBI:43474"/>
        <dbReference type="ChEBI" id="CHEBI:456216"/>
        <dbReference type="EC" id="3.6.4.13"/>
    </reaction>
</comment>
<comment type="subcellular location">
    <subcellularLocation>
        <location evidence="1">Cytoplasm</location>
    </subcellularLocation>
</comment>
<comment type="domain">
    <text>The Q motif is unique to and characteristic of the DEAD box family of RNA helicases and controls ATP binding and hydrolysis.</text>
</comment>
<comment type="similarity">
    <text evidence="5">Belongs to the DEAD box helicase family. DDX3/DED1 subfamily.</text>
</comment>
<organism>
    <name type="scientific">Botryotinia fuckeliana (strain B05.10)</name>
    <name type="common">Noble rot fungus</name>
    <name type="synonym">Botrytis cinerea</name>
    <dbReference type="NCBI Taxonomy" id="332648"/>
    <lineage>
        <taxon>Eukaryota</taxon>
        <taxon>Fungi</taxon>
        <taxon>Dikarya</taxon>
        <taxon>Ascomycota</taxon>
        <taxon>Pezizomycotina</taxon>
        <taxon>Leotiomycetes</taxon>
        <taxon>Helotiales</taxon>
        <taxon>Sclerotiniaceae</taxon>
        <taxon>Botrytis</taxon>
    </lineage>
</organism>
<gene>
    <name type="primary">ded1</name>
    <name type="ORF">BC1G_10862</name>
    <name type="ORF">BCIN_05g00090</name>
</gene>
<evidence type="ECO:0000250" key="1"/>
<evidence type="ECO:0000255" key="2">
    <source>
        <dbReference type="PROSITE-ProRule" id="PRU00541"/>
    </source>
</evidence>
<evidence type="ECO:0000255" key="3">
    <source>
        <dbReference type="PROSITE-ProRule" id="PRU00542"/>
    </source>
</evidence>
<evidence type="ECO:0000256" key="4">
    <source>
        <dbReference type="SAM" id="MobiDB-lite"/>
    </source>
</evidence>
<evidence type="ECO:0000305" key="5"/>
<proteinExistence type="inferred from homology"/>
<feature type="chain" id="PRO_0000310181" description="ATP-dependent RNA helicase ded1">
    <location>
        <begin position="1"/>
        <end position="683"/>
    </location>
</feature>
<feature type="domain" description="Helicase ATP-binding" evidence="2">
    <location>
        <begin position="217"/>
        <end position="408"/>
    </location>
</feature>
<feature type="domain" description="Helicase C-terminal" evidence="3">
    <location>
        <begin position="419"/>
        <end position="579"/>
    </location>
</feature>
<feature type="region of interest" description="Disordered" evidence="4">
    <location>
        <begin position="1"/>
        <end position="137"/>
    </location>
</feature>
<feature type="region of interest" description="Disordered" evidence="4">
    <location>
        <begin position="582"/>
        <end position="683"/>
    </location>
</feature>
<feature type="short sequence motif" description="Q motif">
    <location>
        <begin position="186"/>
        <end position="214"/>
    </location>
</feature>
<feature type="short sequence motif" description="DEAD box">
    <location>
        <begin position="352"/>
        <end position="355"/>
    </location>
</feature>
<feature type="compositionally biased region" description="Low complexity" evidence="4">
    <location>
        <begin position="1"/>
        <end position="15"/>
    </location>
</feature>
<feature type="compositionally biased region" description="Low complexity" evidence="4">
    <location>
        <begin position="73"/>
        <end position="87"/>
    </location>
</feature>
<feature type="compositionally biased region" description="Gly residues" evidence="4">
    <location>
        <begin position="104"/>
        <end position="130"/>
    </location>
</feature>
<feature type="compositionally biased region" description="Gly residues" evidence="4">
    <location>
        <begin position="582"/>
        <end position="602"/>
    </location>
</feature>
<feature type="compositionally biased region" description="Gly residues" evidence="4">
    <location>
        <begin position="609"/>
        <end position="641"/>
    </location>
</feature>
<feature type="compositionally biased region" description="Pro residues" evidence="4">
    <location>
        <begin position="642"/>
        <end position="653"/>
    </location>
</feature>
<feature type="compositionally biased region" description="Gly residues" evidence="4">
    <location>
        <begin position="654"/>
        <end position="683"/>
    </location>
</feature>
<feature type="binding site" evidence="2">
    <location>
        <begin position="230"/>
        <end position="237"/>
    </location>
    <ligand>
        <name>ATP</name>
        <dbReference type="ChEBI" id="CHEBI:30616"/>
    </ligand>
</feature>